<comment type="function">
    <text>3'-5' exonuclease degrading single-stranded small RNAs.</text>
</comment>
<comment type="subcellular location">
    <subcellularLocation>
        <location evidence="3">Nucleus</location>
    </subcellularLocation>
</comment>
<comment type="alternative products">
    <event type="alternative splicing"/>
    <isoform>
        <id>Q9FFG1-1</id>
        <name>1</name>
        <sequence type="displayed"/>
    </isoform>
    <isoform>
        <id>Q9FFG1-2</id>
        <name>2</name>
        <sequence type="described" ref="VSP_035854 VSP_035855"/>
    </isoform>
</comment>
<comment type="disruption phenotype">
    <text evidence="2">No visible phenotype; due to the redundancy with other SDN ribonucleases. Simultaneous knockdown of SDN1, SDN2 and SDN3 results in elevated miRNA levels and pleiotropic developmental defects.</text>
</comment>
<comment type="similarity">
    <text evidence="3">Belongs to the REXO1/REXO3 family.</text>
</comment>
<sequence length="466" mass="53182">MEDVLATAEGVVLVKLVKVAQKLGLKGENGTWKEFLDFYDKQLGSSSLSDPSKRRKDDLVAFLTTLKKKEDLQLLAKSLKLDNDVFEKFKKKSLDETAEQRLVRMTLTHDEYPLDYLFPSNAEDWVRTGLGKKKMEPTKIEMIAIDCEMVLCEDGSEAVVRVAAVDRDLKVILDEFVKPNQPVVDYRTFITGLTAQDLEKATISVVDIQEKLLMFISEDTILVGQSLNHDLKVLKVDHARVIDTSLVFKYNYDGTRRPLRLKRPSLNYLCKCILGYEVQKEGVPHNCVHDAEAAMKLVLAILDNGAETSVPLSKEMLEAEKSKLYLHRIPCNVPYEELNGVVSRDIPHEVKPSKKQDRHYYSAIVVFKSPEEANQAFENIAGDFGKDSRGLSQKQIFLEPSSSEPRLYVLVRKMVEDDLVGEVIAEENNASSKKRKRENHSKGTRDRRRCKPLSRRKQRSNVKRRR</sequence>
<name>SDN2_ARATH</name>
<gene>
    <name type="primary">SDN2</name>
    <name type="ordered locus">At5g05540</name>
    <name type="ORF">MOP10.8</name>
</gene>
<proteinExistence type="evidence at transcript level"/>
<protein>
    <recommendedName>
        <fullName>Small RNA degrading nuclease 2</fullName>
        <ecNumber>3.1.-.-</ecNumber>
    </recommendedName>
</protein>
<dbReference type="EC" id="3.1.-.-"/>
<dbReference type="EMBL" id="AB005241">
    <property type="protein sequence ID" value="BAB11543.1"/>
    <property type="molecule type" value="Genomic_DNA"/>
</dbReference>
<dbReference type="EMBL" id="CP002688">
    <property type="protein sequence ID" value="AED90885.1"/>
    <property type="molecule type" value="Genomic_DNA"/>
</dbReference>
<dbReference type="EMBL" id="CP002688">
    <property type="protein sequence ID" value="AED90886.1"/>
    <property type="molecule type" value="Genomic_DNA"/>
</dbReference>
<dbReference type="EMBL" id="BT009685">
    <property type="protein sequence ID" value="AAP81803.1"/>
    <property type="molecule type" value="mRNA"/>
</dbReference>
<dbReference type="EMBL" id="AK118437">
    <property type="protein sequence ID" value="BAC43046.1"/>
    <property type="molecule type" value="mRNA"/>
</dbReference>
<dbReference type="RefSeq" id="NP_001119175.1">
    <molecule id="Q9FFG1-2"/>
    <property type="nucleotide sequence ID" value="NM_001125703.2"/>
</dbReference>
<dbReference type="RefSeq" id="NP_196173.1">
    <molecule id="Q9FFG1-1"/>
    <property type="nucleotide sequence ID" value="NM_120636.4"/>
</dbReference>
<dbReference type="SMR" id="Q9FFG1"/>
<dbReference type="FunCoup" id="Q9FFG1">
    <property type="interactions" value="1159"/>
</dbReference>
<dbReference type="IntAct" id="Q9FFG1">
    <property type="interactions" value="1"/>
</dbReference>
<dbReference type="STRING" id="3702.Q9FFG1"/>
<dbReference type="iPTMnet" id="Q9FFG1"/>
<dbReference type="PaxDb" id="3702-AT5G05540.1"/>
<dbReference type="ProteomicsDB" id="232667">
    <molecule id="Q9FFG1-1"/>
</dbReference>
<dbReference type="EnsemblPlants" id="AT5G05540.1">
    <molecule id="Q9FFG1-1"/>
    <property type="protein sequence ID" value="AT5G05540.1"/>
    <property type="gene ID" value="AT5G05540"/>
</dbReference>
<dbReference type="EnsemblPlants" id="AT5G05540.2">
    <molecule id="Q9FFG1-2"/>
    <property type="protein sequence ID" value="AT5G05540.2"/>
    <property type="gene ID" value="AT5G05540"/>
</dbReference>
<dbReference type="GeneID" id="830437"/>
<dbReference type="Gramene" id="AT5G05540.1">
    <molecule id="Q9FFG1-1"/>
    <property type="protein sequence ID" value="AT5G05540.1"/>
    <property type="gene ID" value="AT5G05540"/>
</dbReference>
<dbReference type="Gramene" id="AT5G05540.2">
    <molecule id="Q9FFG1-2"/>
    <property type="protein sequence ID" value="AT5G05540.2"/>
    <property type="gene ID" value="AT5G05540"/>
</dbReference>
<dbReference type="KEGG" id="ath:AT5G05540"/>
<dbReference type="Araport" id="AT5G05540"/>
<dbReference type="TAIR" id="AT5G05540">
    <property type="gene designation" value="SDN2"/>
</dbReference>
<dbReference type="eggNOG" id="KOG2248">
    <property type="taxonomic scope" value="Eukaryota"/>
</dbReference>
<dbReference type="InParanoid" id="Q9FFG1"/>
<dbReference type="OMA" id="YEEDWVV"/>
<dbReference type="OrthoDB" id="16516at2759"/>
<dbReference type="PhylomeDB" id="Q9FFG1"/>
<dbReference type="PRO" id="PR:Q9FFG1"/>
<dbReference type="Proteomes" id="UP000006548">
    <property type="component" value="Chromosome 5"/>
</dbReference>
<dbReference type="ExpressionAtlas" id="Q9FFG1">
    <property type="expression patterns" value="baseline and differential"/>
</dbReference>
<dbReference type="GO" id="GO:0005634">
    <property type="term" value="C:nucleus"/>
    <property type="evidence" value="ECO:0007669"/>
    <property type="project" value="UniProtKB-SubCell"/>
</dbReference>
<dbReference type="GO" id="GO:0004527">
    <property type="term" value="F:exonuclease activity"/>
    <property type="evidence" value="ECO:0007669"/>
    <property type="project" value="UniProtKB-KW"/>
</dbReference>
<dbReference type="GO" id="GO:0003676">
    <property type="term" value="F:nucleic acid binding"/>
    <property type="evidence" value="ECO:0007669"/>
    <property type="project" value="InterPro"/>
</dbReference>
<dbReference type="CDD" id="cd06145">
    <property type="entry name" value="REX1_like"/>
    <property type="match status" value="1"/>
</dbReference>
<dbReference type="FunFam" id="3.30.420.10:FF:000080">
    <property type="entry name" value="Small RNA degrading nuclease 3"/>
    <property type="match status" value="1"/>
</dbReference>
<dbReference type="Gene3D" id="3.30.420.10">
    <property type="entry name" value="Ribonuclease H-like superfamily/Ribonuclease H"/>
    <property type="match status" value="1"/>
</dbReference>
<dbReference type="InterPro" id="IPR013520">
    <property type="entry name" value="Exonuclease_RNaseT/DNA_pol3"/>
</dbReference>
<dbReference type="InterPro" id="IPR034922">
    <property type="entry name" value="REX1-like_exo"/>
</dbReference>
<dbReference type="InterPro" id="IPR047021">
    <property type="entry name" value="REXO1/3/4-like"/>
</dbReference>
<dbReference type="InterPro" id="IPR012337">
    <property type="entry name" value="RNaseH-like_sf"/>
</dbReference>
<dbReference type="InterPro" id="IPR036397">
    <property type="entry name" value="RNaseH_sf"/>
</dbReference>
<dbReference type="PANTHER" id="PTHR12801:SF115">
    <property type="entry name" value="FI18136P1-RELATED"/>
    <property type="match status" value="1"/>
</dbReference>
<dbReference type="PANTHER" id="PTHR12801">
    <property type="entry name" value="RNA EXONUCLEASE REXO1 / RECO3 FAMILY MEMBER-RELATED"/>
    <property type="match status" value="1"/>
</dbReference>
<dbReference type="Pfam" id="PF00929">
    <property type="entry name" value="RNase_T"/>
    <property type="match status" value="1"/>
</dbReference>
<dbReference type="SMART" id="SM00479">
    <property type="entry name" value="EXOIII"/>
    <property type="match status" value="1"/>
</dbReference>
<dbReference type="SUPFAM" id="SSF53098">
    <property type="entry name" value="Ribonuclease H-like"/>
    <property type="match status" value="1"/>
</dbReference>
<evidence type="ECO:0000256" key="1">
    <source>
        <dbReference type="SAM" id="MobiDB-lite"/>
    </source>
</evidence>
<evidence type="ECO:0000269" key="2">
    <source>
    </source>
</evidence>
<evidence type="ECO:0000305" key="3"/>
<accession>Q9FFG1</accession>
<accession>B3H5L2</accession>
<reference key="1">
    <citation type="journal article" date="1997" name="DNA Res.">
        <title>Structural analysis of Arabidopsis thaliana chromosome 5. I. Sequence features of the 1.6 Mb regions covered by twenty physically assigned P1 clones.</title>
        <authorList>
            <person name="Sato S."/>
            <person name="Kotani H."/>
            <person name="Nakamura Y."/>
            <person name="Kaneko T."/>
            <person name="Asamizu E."/>
            <person name="Fukami M."/>
            <person name="Miyajima N."/>
            <person name="Tabata S."/>
        </authorList>
    </citation>
    <scope>NUCLEOTIDE SEQUENCE [LARGE SCALE GENOMIC DNA]</scope>
    <source>
        <strain>cv. Columbia</strain>
    </source>
</reference>
<reference key="2">
    <citation type="journal article" date="2017" name="Plant J.">
        <title>Araport11: a complete reannotation of the Arabidopsis thaliana reference genome.</title>
        <authorList>
            <person name="Cheng C.Y."/>
            <person name="Krishnakumar V."/>
            <person name="Chan A.P."/>
            <person name="Thibaud-Nissen F."/>
            <person name="Schobel S."/>
            <person name="Town C.D."/>
        </authorList>
    </citation>
    <scope>GENOME REANNOTATION</scope>
    <source>
        <strain>cv. Columbia</strain>
    </source>
</reference>
<reference key="3">
    <citation type="journal article" date="2003" name="Science">
        <title>Empirical analysis of transcriptional activity in the Arabidopsis genome.</title>
        <authorList>
            <person name="Yamada K."/>
            <person name="Lim J."/>
            <person name="Dale J.M."/>
            <person name="Chen H."/>
            <person name="Shinn P."/>
            <person name="Palm C.J."/>
            <person name="Southwick A.M."/>
            <person name="Wu H.C."/>
            <person name="Kim C.J."/>
            <person name="Nguyen M."/>
            <person name="Pham P.K."/>
            <person name="Cheuk R.F."/>
            <person name="Karlin-Newmann G."/>
            <person name="Liu S.X."/>
            <person name="Lam B."/>
            <person name="Sakano H."/>
            <person name="Wu T."/>
            <person name="Yu G."/>
            <person name="Miranda M."/>
            <person name="Quach H.L."/>
            <person name="Tripp M."/>
            <person name="Chang C.H."/>
            <person name="Lee J.M."/>
            <person name="Toriumi M.J."/>
            <person name="Chan M.M."/>
            <person name="Tang C.C."/>
            <person name="Onodera C.S."/>
            <person name="Deng J.M."/>
            <person name="Akiyama K."/>
            <person name="Ansari Y."/>
            <person name="Arakawa T."/>
            <person name="Banh J."/>
            <person name="Banno F."/>
            <person name="Bowser L."/>
            <person name="Brooks S.Y."/>
            <person name="Carninci P."/>
            <person name="Chao Q."/>
            <person name="Choy N."/>
            <person name="Enju A."/>
            <person name="Goldsmith A.D."/>
            <person name="Gurjal M."/>
            <person name="Hansen N.F."/>
            <person name="Hayashizaki Y."/>
            <person name="Johnson-Hopson C."/>
            <person name="Hsuan V.W."/>
            <person name="Iida K."/>
            <person name="Karnes M."/>
            <person name="Khan S."/>
            <person name="Koesema E."/>
            <person name="Ishida J."/>
            <person name="Jiang P.X."/>
            <person name="Jones T."/>
            <person name="Kawai J."/>
            <person name="Kamiya A."/>
            <person name="Meyers C."/>
            <person name="Nakajima M."/>
            <person name="Narusaka M."/>
            <person name="Seki M."/>
            <person name="Sakurai T."/>
            <person name="Satou M."/>
            <person name="Tamse R."/>
            <person name="Vaysberg M."/>
            <person name="Wallender E.K."/>
            <person name="Wong C."/>
            <person name="Yamamura Y."/>
            <person name="Yuan S."/>
            <person name="Shinozaki K."/>
            <person name="Davis R.W."/>
            <person name="Theologis A."/>
            <person name="Ecker J.R."/>
        </authorList>
    </citation>
    <scope>NUCLEOTIDE SEQUENCE [LARGE SCALE MRNA] (ISOFORM 1)</scope>
    <source>
        <strain>cv. Columbia</strain>
    </source>
</reference>
<reference key="4">
    <citation type="journal article" date="2002" name="Science">
        <title>Functional annotation of a full-length Arabidopsis cDNA collection.</title>
        <authorList>
            <person name="Seki M."/>
            <person name="Narusaka M."/>
            <person name="Kamiya A."/>
            <person name="Ishida J."/>
            <person name="Satou M."/>
            <person name="Sakurai T."/>
            <person name="Nakajima M."/>
            <person name="Enju A."/>
            <person name="Akiyama K."/>
            <person name="Oono Y."/>
            <person name="Muramatsu M."/>
            <person name="Hayashizaki Y."/>
            <person name="Kawai J."/>
            <person name="Carninci P."/>
            <person name="Itoh M."/>
            <person name="Ishii Y."/>
            <person name="Arakawa T."/>
            <person name="Shibata K."/>
            <person name="Shinagawa A."/>
            <person name="Shinozaki K."/>
        </authorList>
    </citation>
    <scope>NUCLEOTIDE SEQUENCE [LARGE SCALE MRNA] (ISOFORM 1)</scope>
    <source>
        <strain>cv. Columbia</strain>
    </source>
</reference>
<reference key="5">
    <citation type="journal article" date="2008" name="Science">
        <title>Degradation of microRNAs by a family of exoribonucleases in Arabidopsis.</title>
        <authorList>
            <person name="Ramachandran V."/>
            <person name="Chen X."/>
        </authorList>
    </citation>
    <scope>IDENTIFICATION</scope>
    <scope>DISRUPTION PHENOTYPE</scope>
</reference>
<keyword id="KW-0025">Alternative splicing</keyword>
<keyword id="KW-0269">Exonuclease</keyword>
<keyword id="KW-0378">Hydrolase</keyword>
<keyword id="KW-0540">Nuclease</keyword>
<keyword id="KW-0539">Nucleus</keyword>
<keyword id="KW-1185">Reference proteome</keyword>
<feature type="chain" id="PRO_0000355085" description="Small RNA degrading nuclease 2">
    <location>
        <begin position="1"/>
        <end position="466"/>
    </location>
</feature>
<feature type="domain" description="Exonuclease">
    <location>
        <begin position="142"/>
        <end position="298"/>
    </location>
</feature>
<feature type="region of interest" description="Disordered" evidence="1">
    <location>
        <begin position="426"/>
        <end position="466"/>
    </location>
</feature>
<feature type="compositionally biased region" description="Basic residues" evidence="1">
    <location>
        <begin position="445"/>
        <end position="466"/>
    </location>
</feature>
<feature type="splice variant" id="VSP_035854" description="In isoform 2." evidence="3">
    <original>P</original>
    <variation>V</variation>
    <location>
        <position position="352"/>
    </location>
</feature>
<feature type="splice variant" id="VSP_035855" description="In isoform 2." evidence="3">
    <location>
        <begin position="353"/>
        <end position="466"/>
    </location>
</feature>
<organism>
    <name type="scientific">Arabidopsis thaliana</name>
    <name type="common">Mouse-ear cress</name>
    <dbReference type="NCBI Taxonomy" id="3702"/>
    <lineage>
        <taxon>Eukaryota</taxon>
        <taxon>Viridiplantae</taxon>
        <taxon>Streptophyta</taxon>
        <taxon>Embryophyta</taxon>
        <taxon>Tracheophyta</taxon>
        <taxon>Spermatophyta</taxon>
        <taxon>Magnoliopsida</taxon>
        <taxon>eudicotyledons</taxon>
        <taxon>Gunneridae</taxon>
        <taxon>Pentapetalae</taxon>
        <taxon>rosids</taxon>
        <taxon>malvids</taxon>
        <taxon>Brassicales</taxon>
        <taxon>Brassicaceae</taxon>
        <taxon>Camelineae</taxon>
        <taxon>Arabidopsis</taxon>
    </lineage>
</organism>